<organism>
    <name type="scientific">Clostridium botulinum (strain Eklund 17B / Type B)</name>
    <dbReference type="NCBI Taxonomy" id="935198"/>
    <lineage>
        <taxon>Bacteria</taxon>
        <taxon>Bacillati</taxon>
        <taxon>Bacillota</taxon>
        <taxon>Clostridia</taxon>
        <taxon>Eubacteriales</taxon>
        <taxon>Clostridiaceae</taxon>
        <taxon>Clostridium</taxon>
    </lineage>
</organism>
<proteinExistence type="inferred from homology"/>
<name>DXS_CLOBB</name>
<gene>
    <name evidence="1" type="primary">dxs</name>
    <name type="ordered locus">CLL_A2401</name>
</gene>
<sequence>MKSLLDSLNFPKDLNNLNDSDTERLSKEIRQFLIESVSKTGGHLSSNLGVVELTLSLMKSFDFEKDKIVWDVGHQSYVYKILTGRKDGFKNLRQFDGLSGFPKRNESKYDYFDTGHSSTSISAGLGMARARDLKKEKYTVVSVIGDGALTGGMALEALNDVGFRKTKMVIILNDNQMSISLNVGGLSRYLNKLRMGETYNRLKTNINTSLGSSDLGKDIISKMSKVKDSIKQLVVPSMFFENMGVKYIGPIDGHDIKAMNEVFSKVKDVEGPVIIHTVTQKGRGYSLAEKSPSKYHAVPPRANEKEKPSKPCKDTYSKAFGNALINIAKEEKEVVAITAAMPDGTGLKEFSTIYPERFFDVGIAEQHAVTLAAGMAANGLKPVFAVYSTFLQRGFDQVIHDVCIQDLPVTFAIDRAGIVGDDGETHQGIMDVSYLSMMPNMTIVAPKCTEEIPSMLRWAIKKNSPVAIRYPRGKDIVCNLHALQEISYGKWEVVSEGKRICIIASGRMLQHAFLAKEILKENGIDPKIVNATFIKPIDKCLLENLKEDGYDILTIEDNIICGGLGMAVLEHLNCIDYKGNMKLLGYDDEFIPQGNVEILYKTYGLDPVSISNTILKLYN</sequence>
<keyword id="KW-0414">Isoprene biosynthesis</keyword>
<keyword id="KW-0460">Magnesium</keyword>
<keyword id="KW-0479">Metal-binding</keyword>
<keyword id="KW-0784">Thiamine biosynthesis</keyword>
<keyword id="KW-0786">Thiamine pyrophosphate</keyword>
<keyword id="KW-0808">Transferase</keyword>
<evidence type="ECO:0000255" key="1">
    <source>
        <dbReference type="HAMAP-Rule" id="MF_00315"/>
    </source>
</evidence>
<evidence type="ECO:0000256" key="2">
    <source>
        <dbReference type="SAM" id="MobiDB-lite"/>
    </source>
</evidence>
<comment type="function">
    <text evidence="1">Catalyzes the acyloin condensation reaction between C atoms 2 and 3 of pyruvate and glyceraldehyde 3-phosphate to yield 1-deoxy-D-xylulose-5-phosphate (DXP).</text>
</comment>
<comment type="catalytic activity">
    <reaction evidence="1">
        <text>D-glyceraldehyde 3-phosphate + pyruvate + H(+) = 1-deoxy-D-xylulose 5-phosphate + CO2</text>
        <dbReference type="Rhea" id="RHEA:12605"/>
        <dbReference type="ChEBI" id="CHEBI:15361"/>
        <dbReference type="ChEBI" id="CHEBI:15378"/>
        <dbReference type="ChEBI" id="CHEBI:16526"/>
        <dbReference type="ChEBI" id="CHEBI:57792"/>
        <dbReference type="ChEBI" id="CHEBI:59776"/>
        <dbReference type="EC" id="2.2.1.7"/>
    </reaction>
</comment>
<comment type="cofactor">
    <cofactor evidence="1">
        <name>Mg(2+)</name>
        <dbReference type="ChEBI" id="CHEBI:18420"/>
    </cofactor>
    <text evidence="1">Binds 1 Mg(2+) ion per subunit.</text>
</comment>
<comment type="cofactor">
    <cofactor evidence="1">
        <name>thiamine diphosphate</name>
        <dbReference type="ChEBI" id="CHEBI:58937"/>
    </cofactor>
    <text evidence="1">Binds 1 thiamine pyrophosphate per subunit.</text>
</comment>
<comment type="pathway">
    <text evidence="1">Metabolic intermediate biosynthesis; 1-deoxy-D-xylulose 5-phosphate biosynthesis; 1-deoxy-D-xylulose 5-phosphate from D-glyceraldehyde 3-phosphate and pyruvate: step 1/1.</text>
</comment>
<comment type="subunit">
    <text evidence="1">Homodimer.</text>
</comment>
<comment type="similarity">
    <text evidence="1">Belongs to the transketolase family. DXPS subfamily.</text>
</comment>
<reference key="1">
    <citation type="submission" date="2008-04" db="EMBL/GenBank/DDBJ databases">
        <title>Complete sequence of Clostridium botulinum strain Eklund.</title>
        <authorList>
            <person name="Brinkac L.M."/>
            <person name="Brown J.L."/>
            <person name="Bruce D."/>
            <person name="Detter C."/>
            <person name="Munk C."/>
            <person name="Smith L.A."/>
            <person name="Smith T.J."/>
            <person name="Sutton G."/>
            <person name="Brettin T.S."/>
        </authorList>
    </citation>
    <scope>NUCLEOTIDE SEQUENCE [LARGE SCALE GENOMIC DNA]</scope>
    <source>
        <strain>Eklund 17B / Type B</strain>
    </source>
</reference>
<protein>
    <recommendedName>
        <fullName evidence="1">1-deoxy-D-xylulose-5-phosphate synthase</fullName>
        <ecNumber evidence="1">2.2.1.7</ecNumber>
    </recommendedName>
    <alternativeName>
        <fullName evidence="1">1-deoxyxylulose-5-phosphate synthase</fullName>
        <shortName evidence="1">DXP synthase</shortName>
        <shortName evidence="1">DXPS</shortName>
    </alternativeName>
</protein>
<dbReference type="EC" id="2.2.1.7" evidence="1"/>
<dbReference type="EMBL" id="CP001056">
    <property type="protein sequence ID" value="ACD23721.1"/>
    <property type="molecule type" value="Genomic_DNA"/>
</dbReference>
<dbReference type="SMR" id="B2TRM5"/>
<dbReference type="KEGG" id="cbk:CLL_A2401"/>
<dbReference type="PATRIC" id="fig|935198.13.peg.2359"/>
<dbReference type="HOGENOM" id="CLU_009227_1_4_9"/>
<dbReference type="UniPathway" id="UPA00064">
    <property type="reaction ID" value="UER00091"/>
</dbReference>
<dbReference type="Proteomes" id="UP000001195">
    <property type="component" value="Chromosome"/>
</dbReference>
<dbReference type="GO" id="GO:0005829">
    <property type="term" value="C:cytosol"/>
    <property type="evidence" value="ECO:0007669"/>
    <property type="project" value="TreeGrafter"/>
</dbReference>
<dbReference type="GO" id="GO:0008661">
    <property type="term" value="F:1-deoxy-D-xylulose-5-phosphate synthase activity"/>
    <property type="evidence" value="ECO:0007669"/>
    <property type="project" value="UniProtKB-UniRule"/>
</dbReference>
<dbReference type="GO" id="GO:0000287">
    <property type="term" value="F:magnesium ion binding"/>
    <property type="evidence" value="ECO:0007669"/>
    <property type="project" value="UniProtKB-UniRule"/>
</dbReference>
<dbReference type="GO" id="GO:0030976">
    <property type="term" value="F:thiamine pyrophosphate binding"/>
    <property type="evidence" value="ECO:0007669"/>
    <property type="project" value="UniProtKB-UniRule"/>
</dbReference>
<dbReference type="GO" id="GO:0052865">
    <property type="term" value="P:1-deoxy-D-xylulose 5-phosphate biosynthetic process"/>
    <property type="evidence" value="ECO:0007669"/>
    <property type="project" value="UniProtKB-UniPathway"/>
</dbReference>
<dbReference type="GO" id="GO:0019288">
    <property type="term" value="P:isopentenyl diphosphate biosynthetic process, methylerythritol 4-phosphate pathway"/>
    <property type="evidence" value="ECO:0007669"/>
    <property type="project" value="TreeGrafter"/>
</dbReference>
<dbReference type="GO" id="GO:0016114">
    <property type="term" value="P:terpenoid biosynthetic process"/>
    <property type="evidence" value="ECO:0007669"/>
    <property type="project" value="UniProtKB-UniRule"/>
</dbReference>
<dbReference type="GO" id="GO:0009228">
    <property type="term" value="P:thiamine biosynthetic process"/>
    <property type="evidence" value="ECO:0007669"/>
    <property type="project" value="UniProtKB-UniRule"/>
</dbReference>
<dbReference type="CDD" id="cd02007">
    <property type="entry name" value="TPP_DXS"/>
    <property type="match status" value="1"/>
</dbReference>
<dbReference type="CDD" id="cd07033">
    <property type="entry name" value="TPP_PYR_DXS_TK_like"/>
    <property type="match status" value="1"/>
</dbReference>
<dbReference type="FunFam" id="3.40.50.970:FF:000005">
    <property type="entry name" value="1-deoxy-D-xylulose-5-phosphate synthase"/>
    <property type="match status" value="1"/>
</dbReference>
<dbReference type="Gene3D" id="3.40.50.920">
    <property type="match status" value="1"/>
</dbReference>
<dbReference type="Gene3D" id="3.40.50.970">
    <property type="match status" value="2"/>
</dbReference>
<dbReference type="HAMAP" id="MF_00315">
    <property type="entry name" value="DXP_synth"/>
    <property type="match status" value="1"/>
</dbReference>
<dbReference type="InterPro" id="IPR005477">
    <property type="entry name" value="Dxylulose-5-P_synthase"/>
</dbReference>
<dbReference type="InterPro" id="IPR029061">
    <property type="entry name" value="THDP-binding"/>
</dbReference>
<dbReference type="InterPro" id="IPR009014">
    <property type="entry name" value="Transketo_C/PFOR_II"/>
</dbReference>
<dbReference type="InterPro" id="IPR005475">
    <property type="entry name" value="Transketolase-like_Pyr-bd"/>
</dbReference>
<dbReference type="InterPro" id="IPR033248">
    <property type="entry name" value="Transketolase_C"/>
</dbReference>
<dbReference type="InterPro" id="IPR049557">
    <property type="entry name" value="Transketolase_CS"/>
</dbReference>
<dbReference type="NCBIfam" id="TIGR00204">
    <property type="entry name" value="dxs"/>
    <property type="match status" value="1"/>
</dbReference>
<dbReference type="NCBIfam" id="NF003933">
    <property type="entry name" value="PRK05444.2-2"/>
    <property type="match status" value="1"/>
</dbReference>
<dbReference type="PANTHER" id="PTHR43322">
    <property type="entry name" value="1-D-DEOXYXYLULOSE 5-PHOSPHATE SYNTHASE-RELATED"/>
    <property type="match status" value="1"/>
</dbReference>
<dbReference type="PANTHER" id="PTHR43322:SF5">
    <property type="entry name" value="1-DEOXY-D-XYLULOSE-5-PHOSPHATE SYNTHASE, CHLOROPLASTIC"/>
    <property type="match status" value="1"/>
</dbReference>
<dbReference type="Pfam" id="PF13292">
    <property type="entry name" value="DXP_synthase_N"/>
    <property type="match status" value="1"/>
</dbReference>
<dbReference type="Pfam" id="PF02779">
    <property type="entry name" value="Transket_pyr"/>
    <property type="match status" value="1"/>
</dbReference>
<dbReference type="Pfam" id="PF02780">
    <property type="entry name" value="Transketolase_C"/>
    <property type="match status" value="1"/>
</dbReference>
<dbReference type="SMART" id="SM00861">
    <property type="entry name" value="Transket_pyr"/>
    <property type="match status" value="1"/>
</dbReference>
<dbReference type="SUPFAM" id="SSF52518">
    <property type="entry name" value="Thiamin diphosphate-binding fold (THDP-binding)"/>
    <property type="match status" value="2"/>
</dbReference>
<dbReference type="SUPFAM" id="SSF52922">
    <property type="entry name" value="TK C-terminal domain-like"/>
    <property type="match status" value="1"/>
</dbReference>
<dbReference type="PROSITE" id="PS00801">
    <property type="entry name" value="TRANSKETOLASE_1"/>
    <property type="match status" value="1"/>
</dbReference>
<accession>B2TRM5</accession>
<feature type="chain" id="PRO_1000115733" description="1-deoxy-D-xylulose-5-phosphate synthase">
    <location>
        <begin position="1"/>
        <end position="619"/>
    </location>
</feature>
<feature type="region of interest" description="Disordered" evidence="2">
    <location>
        <begin position="289"/>
        <end position="312"/>
    </location>
</feature>
<feature type="compositionally biased region" description="Basic and acidic residues" evidence="2">
    <location>
        <begin position="302"/>
        <end position="312"/>
    </location>
</feature>
<feature type="binding site" evidence="1">
    <location>
        <position position="74"/>
    </location>
    <ligand>
        <name>thiamine diphosphate</name>
        <dbReference type="ChEBI" id="CHEBI:58937"/>
    </ligand>
</feature>
<feature type="binding site" evidence="1">
    <location>
        <begin position="115"/>
        <end position="117"/>
    </location>
    <ligand>
        <name>thiamine diphosphate</name>
        <dbReference type="ChEBI" id="CHEBI:58937"/>
    </ligand>
</feature>
<feature type="binding site" evidence="1">
    <location>
        <position position="146"/>
    </location>
    <ligand>
        <name>Mg(2+)</name>
        <dbReference type="ChEBI" id="CHEBI:18420"/>
    </ligand>
</feature>
<feature type="binding site" evidence="1">
    <location>
        <begin position="147"/>
        <end position="148"/>
    </location>
    <ligand>
        <name>thiamine diphosphate</name>
        <dbReference type="ChEBI" id="CHEBI:58937"/>
    </ligand>
</feature>
<feature type="binding site" evidence="1">
    <location>
        <position position="175"/>
    </location>
    <ligand>
        <name>Mg(2+)</name>
        <dbReference type="ChEBI" id="CHEBI:18420"/>
    </ligand>
</feature>
<feature type="binding site" evidence="1">
    <location>
        <position position="175"/>
    </location>
    <ligand>
        <name>thiamine diphosphate</name>
        <dbReference type="ChEBI" id="CHEBI:58937"/>
    </ligand>
</feature>
<feature type="binding site" evidence="1">
    <location>
        <position position="285"/>
    </location>
    <ligand>
        <name>thiamine diphosphate</name>
        <dbReference type="ChEBI" id="CHEBI:58937"/>
    </ligand>
</feature>
<feature type="binding site" evidence="1">
    <location>
        <position position="365"/>
    </location>
    <ligand>
        <name>thiamine diphosphate</name>
        <dbReference type="ChEBI" id="CHEBI:58937"/>
    </ligand>
</feature>